<evidence type="ECO:0000255" key="1">
    <source>
        <dbReference type="HAMAP-Rule" id="MF_01310"/>
    </source>
</evidence>
<evidence type="ECO:0000305" key="2"/>
<comment type="function">
    <text evidence="1">Located on the platform of the 30S subunit, it bridges several disparate RNA helices of the 16S rRNA. Forms part of the Shine-Dalgarno cleft in the 70S ribosome.</text>
</comment>
<comment type="subunit">
    <text evidence="1">Part of the 30S ribosomal subunit. Interacts with proteins S7 and S18. Binds to IF-3.</text>
</comment>
<comment type="similarity">
    <text evidence="1">Belongs to the universal ribosomal protein uS11 family.</text>
</comment>
<reference key="1">
    <citation type="journal article" date="2000" name="Science">
        <title>Complete genome sequence of Neisseria meningitidis serogroup B strain MC58.</title>
        <authorList>
            <person name="Tettelin H."/>
            <person name="Saunders N.J."/>
            <person name="Heidelberg J.F."/>
            <person name="Jeffries A.C."/>
            <person name="Nelson K.E."/>
            <person name="Eisen J.A."/>
            <person name="Ketchum K.A."/>
            <person name="Hood D.W."/>
            <person name="Peden J.F."/>
            <person name="Dodson R.J."/>
            <person name="Nelson W.C."/>
            <person name="Gwinn M.L."/>
            <person name="DeBoy R.T."/>
            <person name="Peterson J.D."/>
            <person name="Hickey E.K."/>
            <person name="Haft D.H."/>
            <person name="Salzberg S.L."/>
            <person name="White O."/>
            <person name="Fleischmann R.D."/>
            <person name="Dougherty B.A."/>
            <person name="Mason T.M."/>
            <person name="Ciecko A."/>
            <person name="Parksey D.S."/>
            <person name="Blair E."/>
            <person name="Cittone H."/>
            <person name="Clark E.B."/>
            <person name="Cotton M.D."/>
            <person name="Utterback T.R."/>
            <person name="Khouri H.M."/>
            <person name="Qin H."/>
            <person name="Vamathevan J.J."/>
            <person name="Gill J."/>
            <person name="Scarlato V."/>
            <person name="Masignani V."/>
            <person name="Pizza M."/>
            <person name="Grandi G."/>
            <person name="Sun L."/>
            <person name="Smith H.O."/>
            <person name="Fraser C.M."/>
            <person name="Moxon E.R."/>
            <person name="Rappuoli R."/>
            <person name="Venter J.C."/>
        </authorList>
    </citation>
    <scope>NUCLEOTIDE SEQUENCE [LARGE SCALE GENOMIC DNA]</scope>
    <source>
        <strain>ATCC BAA-335 / MC58</strain>
    </source>
</reference>
<sequence>MAKANTASRVRKKVRKTVSEGIVHVHASFNNTIITITDRQGNALSWATSGGAGFKGSRKSTPFAAQVAAEAAGKVAQEYGVKNLEVRIKGPGPGRESSVRALNALGFKITSITDVTPLPHNGCRPPKKRRI</sequence>
<keyword id="KW-1185">Reference proteome</keyword>
<keyword id="KW-0687">Ribonucleoprotein</keyword>
<keyword id="KW-0689">Ribosomal protein</keyword>
<keyword id="KW-0694">RNA-binding</keyword>
<keyword id="KW-0699">rRNA-binding</keyword>
<organism>
    <name type="scientific">Neisseria meningitidis serogroup B (strain ATCC BAA-335 / MC58)</name>
    <dbReference type="NCBI Taxonomy" id="122586"/>
    <lineage>
        <taxon>Bacteria</taxon>
        <taxon>Pseudomonadati</taxon>
        <taxon>Pseudomonadota</taxon>
        <taxon>Betaproteobacteria</taxon>
        <taxon>Neisseriales</taxon>
        <taxon>Neisseriaceae</taxon>
        <taxon>Neisseria</taxon>
    </lineage>
</organism>
<proteinExistence type="inferred from homology"/>
<name>RS11_NEIMB</name>
<feature type="chain" id="PRO_0000123187" description="Small ribosomal subunit protein uS11">
    <location>
        <begin position="1"/>
        <end position="131"/>
    </location>
</feature>
<dbReference type="EMBL" id="AE002098">
    <property type="protein sequence ID" value="AAF40623.1"/>
    <property type="molecule type" value="Genomic_DNA"/>
</dbReference>
<dbReference type="PIR" id="F81229">
    <property type="entry name" value="F81229"/>
</dbReference>
<dbReference type="RefSeq" id="NP_273224.1">
    <property type="nucleotide sequence ID" value="NC_003112.2"/>
</dbReference>
<dbReference type="RefSeq" id="WP_002216249.1">
    <property type="nucleotide sequence ID" value="NC_003112.2"/>
</dbReference>
<dbReference type="SMR" id="P66355"/>
<dbReference type="FunCoup" id="P66355">
    <property type="interactions" value="555"/>
</dbReference>
<dbReference type="STRING" id="122586.NMB0166"/>
<dbReference type="PaxDb" id="122586-NMB0166"/>
<dbReference type="GeneID" id="94582061"/>
<dbReference type="KEGG" id="nme:NMB0166"/>
<dbReference type="PATRIC" id="fig|122586.8.peg.207"/>
<dbReference type="HOGENOM" id="CLU_072439_5_0_4"/>
<dbReference type="InParanoid" id="P66355"/>
<dbReference type="OrthoDB" id="9806415at2"/>
<dbReference type="PRO" id="PR:P66355"/>
<dbReference type="Proteomes" id="UP000000425">
    <property type="component" value="Chromosome"/>
</dbReference>
<dbReference type="GO" id="GO:0022627">
    <property type="term" value="C:cytosolic small ribosomal subunit"/>
    <property type="evidence" value="ECO:0000318"/>
    <property type="project" value="GO_Central"/>
</dbReference>
<dbReference type="GO" id="GO:0019843">
    <property type="term" value="F:rRNA binding"/>
    <property type="evidence" value="ECO:0007669"/>
    <property type="project" value="UniProtKB-UniRule"/>
</dbReference>
<dbReference type="GO" id="GO:0003735">
    <property type="term" value="F:structural constituent of ribosome"/>
    <property type="evidence" value="ECO:0000318"/>
    <property type="project" value="GO_Central"/>
</dbReference>
<dbReference type="GO" id="GO:0006412">
    <property type="term" value="P:translation"/>
    <property type="evidence" value="ECO:0000318"/>
    <property type="project" value="GO_Central"/>
</dbReference>
<dbReference type="FunFam" id="3.30.420.80:FF:000001">
    <property type="entry name" value="30S ribosomal protein S11"/>
    <property type="match status" value="1"/>
</dbReference>
<dbReference type="Gene3D" id="3.30.420.80">
    <property type="entry name" value="Ribosomal protein S11"/>
    <property type="match status" value="1"/>
</dbReference>
<dbReference type="HAMAP" id="MF_01310">
    <property type="entry name" value="Ribosomal_uS11"/>
    <property type="match status" value="1"/>
</dbReference>
<dbReference type="InterPro" id="IPR001971">
    <property type="entry name" value="Ribosomal_uS11"/>
</dbReference>
<dbReference type="InterPro" id="IPR019981">
    <property type="entry name" value="Ribosomal_uS11_bac-type"/>
</dbReference>
<dbReference type="InterPro" id="IPR018102">
    <property type="entry name" value="Ribosomal_uS11_CS"/>
</dbReference>
<dbReference type="InterPro" id="IPR036967">
    <property type="entry name" value="Ribosomal_uS11_sf"/>
</dbReference>
<dbReference type="NCBIfam" id="NF003698">
    <property type="entry name" value="PRK05309.1"/>
    <property type="match status" value="1"/>
</dbReference>
<dbReference type="NCBIfam" id="TIGR03632">
    <property type="entry name" value="uS11_bact"/>
    <property type="match status" value="1"/>
</dbReference>
<dbReference type="PANTHER" id="PTHR11759">
    <property type="entry name" value="40S RIBOSOMAL PROTEIN S14/30S RIBOSOMAL PROTEIN S11"/>
    <property type="match status" value="1"/>
</dbReference>
<dbReference type="Pfam" id="PF00411">
    <property type="entry name" value="Ribosomal_S11"/>
    <property type="match status" value="1"/>
</dbReference>
<dbReference type="PIRSF" id="PIRSF002131">
    <property type="entry name" value="Ribosomal_S11"/>
    <property type="match status" value="1"/>
</dbReference>
<dbReference type="SUPFAM" id="SSF53137">
    <property type="entry name" value="Translational machinery components"/>
    <property type="match status" value="1"/>
</dbReference>
<dbReference type="PROSITE" id="PS00054">
    <property type="entry name" value="RIBOSOMAL_S11"/>
    <property type="match status" value="1"/>
</dbReference>
<gene>
    <name evidence="1" type="primary">rpsK</name>
    <name type="ordered locus">NMB0166</name>
</gene>
<accession>P66355</accession>
<accession>Q9JQR2</accession>
<protein>
    <recommendedName>
        <fullName evidence="1">Small ribosomal subunit protein uS11</fullName>
    </recommendedName>
    <alternativeName>
        <fullName evidence="2">30S ribosomal protein S11</fullName>
    </alternativeName>
</protein>